<protein>
    <recommendedName>
        <fullName evidence="26 27 28">Receptor-like protein CLAVATA2</fullName>
    </recommendedName>
    <alternativeName>
        <fullName evidence="21">Receptor-like protein 10</fullName>
        <shortName evidence="21">AtRLP10</shortName>
    </alternativeName>
</protein>
<gene>
    <name evidence="26 27 28" type="primary">CLV2</name>
    <name evidence="21" type="synonym">RLP10</name>
    <name evidence="24" type="ordered locus">At1g65380</name>
    <name evidence="25" type="ORF">T8F5.16</name>
</gene>
<name>CLV2_ARATH</name>
<comment type="function">
    <text evidence="3 5 7 8 11 13 15 18 19 20">Involved in the perception of CLV3 and CLV3-like (CLE) peptides, that act as extracellular signals regulating meristems maintenance. Required for the sensing of the root CLE peptides (e.g. CLE8, CLE9/CLE10, CLE11, CLE13, CLE14, CLE16, CLE17, CLE18, CLE20, CLE21, CLE25, CLE26, CLE40, CLE41/CLE44 and CLE45), which also involves CRN and leads to root growth regulation, mostly in the phloem and protophloem (PubMed:28607033). Involved in controlling the stem cell population size in shoot and root apical meristems, and during organ development. Promotes the formation of CLV1 multimers. In complex with CRN, perceives secreted CLV3-like effector proteins from plant-parasitic cyst nematodes as ligand mimics of the plant CLE signaling pathway (PubMed:21265896, PubMed:21750229). This recognition is required for proper feeding structure (syncytium) development and ultimately successful nematode infection (PubMed:21265896, PubMed:21750229). CLE14 perception by CLV2/CRN complex triggers root meristem differentiation (PubMed:20697738, PubMed:28586647).</text>
</comment>
<comment type="subunit">
    <text evidence="6 8 9 10 11 17 18 19">Parts of a tetrameric complex made of two CLV2/CRN heterodimers that can interact with CLV3 and CLE peptides. CLV2/CRN heterodimer interacts with CLV1 homodimers. Interacts with CRN; this dimer can interact with BAM3 (PubMed:27229734, PubMed:28607033). Interacts with CLE14 (PubMed:28586647).</text>
</comment>
<comment type="subcellular location">
    <subcellularLocation>
        <location evidence="8 12 17 19">Cell membrane</location>
        <topology evidence="8 12">Single-pass type I membrane protein</topology>
    </subcellularLocation>
    <subcellularLocation>
        <location evidence="12 17 19">Endoplasmic reticulum membrane</location>
        <topology evidence="12">Single-pass type I membrane protein</topology>
    </subcellularLocation>
    <text evidence="8 17 19">Requires CRN for export from the endoplasmic reticulum and localization to the plasma membrane.</text>
</comment>
<comment type="tissue specificity">
    <text evidence="3 13 19">Mostly expressed in apices (e.g. shoot apical meristem and flower buds), and, to a lower extent, in flowers, leaves, seedlings and siliques. Also expressed in the inner tissues of the proximal root meristem (PubMed:21265896). Expressed throughout the vascular cylinder of root tips (PubMed:28607033).</text>
</comment>
<comment type="developmental stage">
    <text evidence="17">In roots, mostly expressed in the stele and young epidermis cells and, to a weaker extent, in endodermis, cortex and differentiated columella cells.</text>
</comment>
<comment type="disruption phenotype">
    <text evidence="5 13 14 16 17 19 20">Insensitivity to root growth regulation by root CLE peptides (e.g. CLE8, CLE9/CLE10, CLE11, CLE13, CLE14, CLE16, CLE17, CLE18, CLE20, CLE21, CLE25, CLE26, CLE40, CLE41/CLE44 and CLE45) (PubMed:28607033). Impaired interaction with CRN (PubMed:27229734). Stem cell proliferation leading to enlarged shoot and flower meristems, as well as alterations in the development of the gynoecia, flower pedicels, and stamens. Reduced sensitivity to CLV3, CLE19 and CLE40 peptides. Ectopic fruit organ initiation after floral meristem termination (PubMed:21705761). Enhanced resistance to nematode infection (PubMed:21265896). Enhanced disease resistance response to the bacterial pathogen Ralstonia solanacearum and to the biotrophic oomycete pathogen Hyaloperonospora arabidopsidis (PubMed:26990325).</text>
</comment>
<comment type="similarity">
    <text evidence="22">Belongs to the RLP family.</text>
</comment>
<evidence type="ECO:0000250" key="1">
    <source>
        <dbReference type="UniProtKB" id="Q94AG2"/>
    </source>
</evidence>
<evidence type="ECO:0000255" key="2"/>
<evidence type="ECO:0000269" key="3">
    <source>
    </source>
</evidence>
<evidence type="ECO:0000269" key="4">
    <source>
    </source>
</evidence>
<evidence type="ECO:0000269" key="5">
    <source>
    </source>
</evidence>
<evidence type="ECO:0000269" key="6">
    <source>
    </source>
</evidence>
<evidence type="ECO:0000269" key="7">
    <source>
    </source>
</evidence>
<evidence type="ECO:0000269" key="8">
    <source>
    </source>
</evidence>
<evidence type="ECO:0000269" key="9">
    <source>
    </source>
</evidence>
<evidence type="ECO:0000269" key="10">
    <source>
    </source>
</evidence>
<evidence type="ECO:0000269" key="11">
    <source>
    </source>
</evidence>
<evidence type="ECO:0000269" key="12">
    <source>
    </source>
</evidence>
<evidence type="ECO:0000269" key="13">
    <source>
    </source>
</evidence>
<evidence type="ECO:0000269" key="14">
    <source>
    </source>
</evidence>
<evidence type="ECO:0000269" key="15">
    <source>
    </source>
</evidence>
<evidence type="ECO:0000269" key="16">
    <source>
    </source>
</evidence>
<evidence type="ECO:0000269" key="17">
    <source>
    </source>
</evidence>
<evidence type="ECO:0000269" key="18">
    <source>
    </source>
</evidence>
<evidence type="ECO:0000269" key="19">
    <source>
    </source>
</evidence>
<evidence type="ECO:0000269" key="20">
    <source>
    </source>
</evidence>
<evidence type="ECO:0000303" key="21">
    <source>
    </source>
</evidence>
<evidence type="ECO:0000305" key="22"/>
<evidence type="ECO:0000305" key="23">
    <source>
    </source>
</evidence>
<evidence type="ECO:0000312" key="24">
    <source>
        <dbReference type="Araport" id="AT1G65380"/>
    </source>
</evidence>
<evidence type="ECO:0000312" key="25">
    <source>
        <dbReference type="EMBL" id="AAC27153.1"/>
    </source>
</evidence>
<evidence type="ECO:0000312" key="26">
    <source>
        <dbReference type="EMBL" id="AAF02654.1"/>
    </source>
</evidence>
<evidence type="ECO:0000312" key="27">
    <source>
        <dbReference type="EMBL" id="AAF02655.1"/>
    </source>
</evidence>
<evidence type="ECO:0000312" key="28">
    <source>
        <dbReference type="EMBL" id="AAF02656.1"/>
    </source>
</evidence>
<sequence>MIKIADFTLFFFIFVFSPSLPLAQSQLPDLDPQDKASLLIFRVSIHDLNRSLSTWYGSSCSNWTGLACQNPTGKVLSLTLSGLNLSSQIHPSLCKLSSLQSLDLSHNNFSGNIPSCFGSLRNLRTLNLSRNRFVGSIPATFVSLKELREVVLSENRDLGGVVPHWFGNFSMNLERVDFSFCSFVGELPESLLYLKSLKYLNLESNNMTGTLRDFQQPLVVLNLASNQFSGTLPCFYASRPSLSILNIAENSLVGGLPSCLGSLKELSHLNLSFNGFNYEISPRLMFSEKLVMLDLSHNGFSGRLPSRISETTEKLGLVLLDLSHNSFSGDIPLRITELKSLQALRLSHNLLTGDIPARIGNLTYLQVIDLSHNALTGSIPLNIVGCFQLLALMISNNNLSGEIQPELDALDSLKILDISNNHISGEIPLTLAGLKSLEIVDISSNNLSGNLNEAITKWSNLKYLSLARNKFSGTLPSWLFKFDKIQMIDYSSNRFSWFIPDDNLNSTRFKDFQTGGGEGFAEPPGKVEIKISAAVVAKDELSFSYNLLSMVGIDLSDNLLHGEIPEALFRQKNIEYLNLSYNFLEGQLPRLEKLPRLKALDLSHNSLSGQVIGNISAPPGLTLLNLSHNCFSGIITEKEGLGKFPGALAGNPELCVETPGSKCDPANIDASQEEIYQNELVEGPISIWIFCLSAFISFDFGVLGIFCSARARSYILQTKA</sequence>
<feature type="signal peptide" evidence="2">
    <location>
        <begin position="1"/>
        <end position="25"/>
    </location>
</feature>
<feature type="chain" id="PRO_0000401212" description="Receptor-like protein CLAVATA2">
    <location>
        <begin position="26"/>
        <end position="720"/>
    </location>
</feature>
<feature type="topological domain" description="Extracellular" evidence="2">
    <location>
        <begin position="26"/>
        <end position="686"/>
    </location>
</feature>
<feature type="transmembrane region" description="Helical" evidence="2">
    <location>
        <begin position="687"/>
        <end position="707"/>
    </location>
</feature>
<feature type="topological domain" description="Cytoplasmic" evidence="2">
    <location>
        <begin position="708"/>
        <end position="720"/>
    </location>
</feature>
<feature type="repeat" description="LRR 1" evidence="2">
    <location>
        <begin position="96"/>
        <end position="122"/>
    </location>
</feature>
<feature type="repeat" description="LRR 2" evidence="2">
    <location>
        <begin position="124"/>
        <end position="144"/>
    </location>
</feature>
<feature type="repeat" description="LRR 3" evidence="2">
    <location>
        <begin position="146"/>
        <end position="168"/>
    </location>
</feature>
<feature type="repeat" description="LRR 4" evidence="2">
    <location>
        <begin position="170"/>
        <end position="194"/>
    </location>
</feature>
<feature type="repeat" description="LRR 5" evidence="2">
    <location>
        <begin position="195"/>
        <end position="217"/>
    </location>
</feature>
<feature type="repeat" description="LRR 6" evidence="2">
    <location>
        <begin position="219"/>
        <end position="238"/>
    </location>
</feature>
<feature type="repeat" description="LRR 7" evidence="2">
    <location>
        <begin position="239"/>
        <end position="263"/>
    </location>
</feature>
<feature type="repeat" description="LRR 8" evidence="2">
    <location>
        <begin position="264"/>
        <end position="287"/>
    </location>
</feature>
<feature type="repeat" description="LRR 9" evidence="2">
    <location>
        <begin position="288"/>
        <end position="311"/>
    </location>
</feature>
<feature type="repeat" description="LRR 10" evidence="2">
    <location>
        <begin position="314"/>
        <end position="338"/>
    </location>
</feature>
<feature type="repeat" description="LRR 11" evidence="2">
    <location>
        <begin position="339"/>
        <end position="362"/>
    </location>
</feature>
<feature type="repeat" description="LRR 12" evidence="2">
    <location>
        <begin position="364"/>
        <end position="386"/>
    </location>
</feature>
<feature type="repeat" description="LRR 13" evidence="2">
    <location>
        <begin position="388"/>
        <end position="410"/>
    </location>
</feature>
<feature type="repeat" description="LRR 14" evidence="2">
    <location>
        <begin position="411"/>
        <end position="436"/>
    </location>
</feature>
<feature type="repeat" description="LRR 15" evidence="2">
    <location>
        <begin position="438"/>
        <end position="458"/>
    </location>
</feature>
<feature type="repeat" description="LRR 16" evidence="2">
    <location>
        <begin position="459"/>
        <end position="482"/>
    </location>
</feature>
<feature type="repeat" description="LRR 17" evidence="2">
    <location>
        <begin position="484"/>
        <end position="506"/>
    </location>
</feature>
<feature type="repeat" description="LRR 18" evidence="2">
    <location>
        <begin position="547"/>
        <end position="571"/>
    </location>
</feature>
<feature type="repeat" description="LRR 19" evidence="2">
    <location>
        <begin position="573"/>
        <end position="594"/>
    </location>
</feature>
<feature type="repeat" description="LRR 20" evidence="2">
    <location>
        <begin position="595"/>
        <end position="617"/>
    </location>
</feature>
<feature type="repeat" description="LRR 21" evidence="2">
    <location>
        <begin position="619"/>
        <end position="641"/>
    </location>
</feature>
<feature type="region of interest" description="N-cap" evidence="23">
    <location>
        <begin position="26"/>
        <end position="92"/>
    </location>
</feature>
<feature type="region of interest" description="C-cap/acidic domain" evidence="23">
    <location>
        <begin position="649"/>
        <end position="682"/>
    </location>
</feature>
<feature type="glycosylation site" description="N-linked (GlcNAc...) asparagine" evidence="2">
    <location>
        <position position="49"/>
    </location>
</feature>
<feature type="glycosylation site" description="N-linked (GlcNAc...) asparagine" evidence="2">
    <location>
        <position position="62"/>
    </location>
</feature>
<feature type="glycosylation site" description="N-linked (GlcNAc...) asparagine" evidence="2">
    <location>
        <position position="84"/>
    </location>
</feature>
<feature type="glycosylation site" description="N-linked (GlcNAc...) asparagine" evidence="2">
    <location>
        <position position="108"/>
    </location>
</feature>
<feature type="glycosylation site" description="N-linked (GlcNAc...) asparagine" evidence="2">
    <location>
        <position position="127"/>
    </location>
</feature>
<feature type="glycosylation site" description="N-linked (GlcNAc...) asparagine" evidence="2">
    <location>
        <position position="168"/>
    </location>
</feature>
<feature type="glycosylation site" description="N-linked (GlcNAc...) asparagine" evidence="2">
    <location>
        <position position="206"/>
    </location>
</feature>
<feature type="glycosylation site" description="N-linked (GlcNAc...) asparagine" evidence="2">
    <location>
        <position position="270"/>
    </location>
</feature>
<feature type="glycosylation site" description="N-linked (GlcNAc...) asparagine" evidence="2">
    <location>
        <position position="361"/>
    </location>
</feature>
<feature type="glycosylation site" description="N-linked (GlcNAc...) asparagine" evidence="2">
    <location>
        <position position="398"/>
    </location>
</feature>
<feature type="glycosylation site" description="N-linked (GlcNAc...) asparagine" evidence="2">
    <location>
        <position position="446"/>
    </location>
</feature>
<feature type="glycosylation site" description="N-linked (GlcNAc...) asparagine" evidence="2">
    <location>
        <position position="505"/>
    </location>
</feature>
<feature type="glycosylation site" description="N-linked (GlcNAc...) asparagine" evidence="2">
    <location>
        <position position="578"/>
    </location>
</feature>
<feature type="glycosylation site" description="N-linked (GlcNAc...) asparagine" evidence="2">
    <location>
        <position position="614"/>
    </location>
</feature>
<feature type="glycosylation site" description="N-linked (GlcNAc...) asparagine" evidence="2">
    <location>
        <position position="625"/>
    </location>
</feature>
<feature type="disulfide bond" evidence="1">
    <location>
        <begin position="60"/>
        <end position="68"/>
    </location>
</feature>
<feature type="sequence variant" description="In strain: cv. Chi-1, cv. Wassilewskija." evidence="3 4">
    <original>L</original>
    <variation>S</variation>
    <location>
        <position position="80"/>
    </location>
</feature>
<feature type="sequence variant" description="In strain: cv. An-2, cv. Bla-1, cv. Bs-1, cv. Bu-0, cv. Chi-1, cv. Co-1, cv. Cvi-0, cv. El-0, cv. Gr-3, cv. Ita-0, cv. Jl-3, cv. Kas-1, cv. Landsberg erecta, cv. Lisse-2, cv. Lu-1, cv. Pi-0, cv. Sf-1, cv. Wassilewskija." evidence="3 4">
    <original>S</original>
    <variation>G</variation>
    <location>
        <position position="87"/>
    </location>
</feature>
<feature type="sequence variant" description="In strain: cv. Landsberg erecta." evidence="3 4">
    <original>S</original>
    <variation>C</variation>
    <location>
        <position position="110"/>
    </location>
</feature>
<feature type="sequence variant" description="In strain: cv. An-2, cv. Bla-1, cv. Bs-1, cv. Chi-1, cv. Cvi-0, cv. Lisse-2, cv. Sf-1, cv. Wassilewskija." evidence="3 4">
    <original>T</original>
    <variation>I</variation>
    <location>
        <position position="125"/>
    </location>
</feature>
<feature type="sequence variant" description="In strain: cv. Bu-0, cv. Co-1, cv. El-0, cv. Gr-3, cv. Jl-3, cv. Kas-1, cv. Landsberg erecta, cv. Lu-1, cv. Pi-0." evidence="3 4">
    <original>V</original>
    <variation>I</variation>
    <location>
        <position position="134"/>
    </location>
</feature>
<feature type="sequence variant" description="In strain: cv. Bu-0, cv. Co-1, cv. El-0, cv. Gr-3, cv. Jl-3, cv. Kas-1, cv. Landsberg erecta, cv. Lu-1, cv. Pi-0." evidence="3 4">
    <original>ATFV</original>
    <variation>PTFM</variation>
    <location>
        <begin position="139"/>
        <end position="142"/>
    </location>
</feature>
<feature type="sequence variant" description="In strain: cv. An-2." evidence="4">
    <original>A</original>
    <variation>T</variation>
    <location>
        <position position="139"/>
    </location>
</feature>
<feature type="sequence variant" description="In strain: cv. Bu-0, cv. Co-1, cv. El-0, cv. Gr-3, cv. Jl-3, cv. Kas-1, cv. Landsberg erecta, cv. Lu-1, cv. Pi-0." evidence="3 4">
    <original>R</original>
    <variation>G</variation>
    <location>
        <position position="148"/>
    </location>
</feature>
<feature type="sequence variant" description="In strain: cv. Bu-0, cv. Co-1, cv. El-0, cv. Gr-3, cv. Jl-3, cv. Kas-1, cv. Landsberg erecta, cv. Lu-1, cv. Pi-0." evidence="3 4">
    <original>D</original>
    <variation>N</variation>
    <location>
        <position position="157"/>
    </location>
</feature>
<feature type="sequence variant" description="In strain: cv. An-2, cv. Bla-1, cv. Bs-1, cv. Chi-1, cv. Cvi-0, cv. Lisse-2, cv. Sf-1, cv. Wassilewskija." evidence="3 4">
    <original>V</original>
    <variation>I</variation>
    <location>
        <position position="162"/>
    </location>
</feature>
<feature type="sequence variant" description="In strain: cv. An-2, cv. Bla-1, cv. Bs-1, cv. Bu-0, cv. Chi-1, cv. Co-1, cv. Cvi-0, cv. El-0, cv. Gr-3, cv. Ita-0, cv. Jl-3, cv. Kas-1, cv. Landsberg erecta, cv. Lisse-2, cv. Lu-1, cv. Pi-0, cv. Sf-1, cv. Wassilewskija." evidence="3 4">
    <original>N</original>
    <variation>D</variation>
    <location>
        <position position="168"/>
    </location>
</feature>
<feature type="sequence variant" description="In strain: cv. An-2, cv. Bla-1, cv. Bs-1, cv. Chi-1, cv. Cvi-0, cv. Lisse-2, cv. Sf-1, cv. Wassilewskija." evidence="3 4">
    <original>F</original>
    <variation>I</variation>
    <location>
        <position position="178"/>
    </location>
</feature>
<feature type="sequence variant" description="In strain: cv. Bu-0, cv. Co-1, cv. El-0, cv. Gr-3, cv. Ita-0, cv. Jl-3, cv. Kas-1, cv. Landsberg erecta, cv. Lu-1, cv. Pi-0." evidence="3 4">
    <original>F</original>
    <variation>L</variation>
    <location>
        <position position="178"/>
    </location>
</feature>
<feature type="sequence variant" description="In strain: cv. Ita-0." evidence="4">
    <original>M</original>
    <variation>I</variation>
    <location>
        <position position="207"/>
    </location>
</feature>
<feature type="sequence variant" description="In strain: cv. Bu-0, cv. Co-1, cv. El-0, cv. Gr-3, cv. Ita-0, cv. Jl-3, cv. Kas-1, cv. Landsberg erecta, cv. Lu-1, cv. Pi-0." evidence="3 4">
    <original>Q</original>
    <variation>R</variation>
    <location>
        <position position="227"/>
    </location>
</feature>
<feature type="sequence variant" description="In strain: cv. Bu-0, cv. Co-1, cv. El-0, cv. Gr-3, cv. Ita-0, cv. Jl-3, cv. Kas-1, cv. Landsberg erecta, cv. Lu-1, cv. Pi-0." evidence="3 4">
    <original>ILNI</original>
    <variation>VLNL</variation>
    <location>
        <begin position="244"/>
        <end position="247"/>
    </location>
</feature>
<feature type="sequence variant" description="In strain: cv. Ita-0." evidence="4">
    <original>K</original>
    <variation>T</variation>
    <location>
        <position position="264"/>
    </location>
</feature>
<feature type="sequence variant" description="In strain: cv. Bu-0, cv. Co-1, cv. El-0, cv. Gr-3, cv. Jl-3, cv. Kas-1, cv. Landsberg erecta, cv. Lu-1, cv. Pi-0." evidence="3 4">
    <original>M</original>
    <variation>V</variation>
    <location>
        <position position="285"/>
    </location>
</feature>
<feature type="sequence variant" description="In strain: cv. Ita-0." evidence="4">
    <original>R</original>
    <variation>C</variation>
    <location>
        <position position="303"/>
    </location>
</feature>
<feature type="sequence variant" description="In strain: cv. Bu-0, cv. Co-1, cv. El-0, cv. Gr-3, cv. Jl-3, cv. Kas-1, cv. Landsberg erecta, cv. Lu-1, cv. Pi-0." evidence="3 4">
    <original>A</original>
    <variation>S</variation>
    <location>
        <position position="374"/>
    </location>
</feature>
<feature type="sequence variant" description="In strain: cv. Landsberg erecta." evidence="3">
    <original>K</original>
    <variation>R</variation>
    <location>
        <position position="572"/>
    </location>
</feature>
<feature type="sequence variant" description="In strain: cv. Wassilewskija." evidence="3">
    <original>A</original>
    <variation>T</variation>
    <location>
        <position position="649"/>
    </location>
</feature>
<proteinExistence type="evidence at protein level"/>
<keyword id="KW-1003">Cell membrane</keyword>
<keyword id="KW-0217">Developmental protein</keyword>
<keyword id="KW-1015">Disulfide bond</keyword>
<keyword id="KW-0256">Endoplasmic reticulum</keyword>
<keyword id="KW-0325">Glycoprotein</keyword>
<keyword id="KW-0433">Leucine-rich repeat</keyword>
<keyword id="KW-0472">Membrane</keyword>
<keyword id="KW-0675">Receptor</keyword>
<keyword id="KW-1185">Reference proteome</keyword>
<keyword id="KW-0677">Repeat</keyword>
<keyword id="KW-0732">Signal</keyword>
<keyword id="KW-0812">Transmembrane</keyword>
<keyword id="KW-1133">Transmembrane helix</keyword>
<organism>
    <name type="scientific">Arabidopsis thaliana</name>
    <name type="common">Mouse-ear cress</name>
    <dbReference type="NCBI Taxonomy" id="3702"/>
    <lineage>
        <taxon>Eukaryota</taxon>
        <taxon>Viridiplantae</taxon>
        <taxon>Streptophyta</taxon>
        <taxon>Embryophyta</taxon>
        <taxon>Tracheophyta</taxon>
        <taxon>Spermatophyta</taxon>
        <taxon>Magnoliopsida</taxon>
        <taxon>eudicotyledons</taxon>
        <taxon>Gunneridae</taxon>
        <taxon>Pentapetalae</taxon>
        <taxon>rosids</taxon>
        <taxon>malvids</taxon>
        <taxon>Brassicales</taxon>
        <taxon>Brassicaceae</taxon>
        <taxon>Camelineae</taxon>
        <taxon>Arabidopsis</taxon>
    </lineage>
</organism>
<reference key="1">
    <citation type="journal article" date="1999" name="Plant Cell">
        <title>The Arabidopsis CLAVATA2 gene encodes a receptor-like protein required for the stability of the CLAVATA1 receptor-like kinase.</title>
        <authorList>
            <person name="Jeong S."/>
            <person name="Trotochaud A.E."/>
            <person name="Clark S.E."/>
        </authorList>
    </citation>
    <scope>NUCLEOTIDE SEQUENCE [GENOMIC DNA]</scope>
    <scope>VARIANTS SER-80; GLY-87; CYS-110; ILE-125; ILE-134; 139-ALA--VAL-142 DELINS PRO-THR-PHE-MET; GLY-148; ASN-157; ILE-162; ASP-168; ILE-178; LEU-178; ARG-227; 244-ILE--ILE-247 DELINS VAL-LEU-ASN-LEU; VAL-285; SER-374; ARG-572 AND THR-649</scope>
    <scope>FUNCTION</scope>
    <scope>TISSUE SPECIFICITY</scope>
    <source>
        <strain>cv. Columbia</strain>
        <strain>cv. Landsberg erecta</strain>
        <strain>cv. Wassilewskija</strain>
    </source>
</reference>
<reference key="2">
    <citation type="journal article" date="2000" name="Nature">
        <title>Sequence and analysis of chromosome 1 of the plant Arabidopsis thaliana.</title>
        <authorList>
            <person name="Theologis A."/>
            <person name="Ecker J.R."/>
            <person name="Palm C.J."/>
            <person name="Federspiel N.A."/>
            <person name="Kaul S."/>
            <person name="White O."/>
            <person name="Alonso J."/>
            <person name="Altafi H."/>
            <person name="Araujo R."/>
            <person name="Bowman C.L."/>
            <person name="Brooks S.Y."/>
            <person name="Buehler E."/>
            <person name="Chan A."/>
            <person name="Chao Q."/>
            <person name="Chen H."/>
            <person name="Cheuk R.F."/>
            <person name="Chin C.W."/>
            <person name="Chung M.K."/>
            <person name="Conn L."/>
            <person name="Conway A.B."/>
            <person name="Conway A.R."/>
            <person name="Creasy T.H."/>
            <person name="Dewar K."/>
            <person name="Dunn P."/>
            <person name="Etgu P."/>
            <person name="Feldblyum T.V."/>
            <person name="Feng J.-D."/>
            <person name="Fong B."/>
            <person name="Fujii C.Y."/>
            <person name="Gill J.E."/>
            <person name="Goldsmith A.D."/>
            <person name="Haas B."/>
            <person name="Hansen N.F."/>
            <person name="Hughes B."/>
            <person name="Huizar L."/>
            <person name="Hunter J.L."/>
            <person name="Jenkins J."/>
            <person name="Johnson-Hopson C."/>
            <person name="Khan S."/>
            <person name="Khaykin E."/>
            <person name="Kim C.J."/>
            <person name="Koo H.L."/>
            <person name="Kremenetskaia I."/>
            <person name="Kurtz D.B."/>
            <person name="Kwan A."/>
            <person name="Lam B."/>
            <person name="Langin-Hooper S."/>
            <person name="Lee A."/>
            <person name="Lee J.M."/>
            <person name="Lenz C.A."/>
            <person name="Li J.H."/>
            <person name="Li Y.-P."/>
            <person name="Lin X."/>
            <person name="Liu S.X."/>
            <person name="Liu Z.A."/>
            <person name="Luros J.S."/>
            <person name="Maiti R."/>
            <person name="Marziali A."/>
            <person name="Militscher J."/>
            <person name="Miranda M."/>
            <person name="Nguyen M."/>
            <person name="Nierman W.C."/>
            <person name="Osborne B.I."/>
            <person name="Pai G."/>
            <person name="Peterson J."/>
            <person name="Pham P.K."/>
            <person name="Rizzo M."/>
            <person name="Rooney T."/>
            <person name="Rowley D."/>
            <person name="Sakano H."/>
            <person name="Salzberg S.L."/>
            <person name="Schwartz J.R."/>
            <person name="Shinn P."/>
            <person name="Southwick A.M."/>
            <person name="Sun H."/>
            <person name="Tallon L.J."/>
            <person name="Tambunga G."/>
            <person name="Toriumi M.J."/>
            <person name="Town C.D."/>
            <person name="Utterback T."/>
            <person name="Van Aken S."/>
            <person name="Vaysberg M."/>
            <person name="Vysotskaia V.S."/>
            <person name="Walker M."/>
            <person name="Wu D."/>
            <person name="Yu G."/>
            <person name="Fraser C.M."/>
            <person name="Venter J.C."/>
            <person name="Davis R.W."/>
        </authorList>
    </citation>
    <scope>NUCLEOTIDE SEQUENCE [LARGE SCALE GENOMIC DNA]</scope>
    <source>
        <strain>cv. Columbia</strain>
    </source>
</reference>
<reference key="3">
    <citation type="journal article" date="2017" name="Plant J.">
        <title>Araport11: a complete reannotation of the Arabidopsis thaliana reference genome.</title>
        <authorList>
            <person name="Cheng C.Y."/>
            <person name="Krishnakumar V."/>
            <person name="Chan A.P."/>
            <person name="Thibaud-Nissen F."/>
            <person name="Schobel S."/>
            <person name="Town C.D."/>
        </authorList>
    </citation>
    <scope>GENOME REANNOTATION</scope>
    <source>
        <strain>cv. Columbia</strain>
    </source>
</reference>
<reference key="4">
    <citation type="journal article" date="2003" name="Science">
        <title>Empirical analysis of transcriptional activity in the Arabidopsis genome.</title>
        <authorList>
            <person name="Yamada K."/>
            <person name="Lim J."/>
            <person name="Dale J.M."/>
            <person name="Chen H."/>
            <person name="Shinn P."/>
            <person name="Palm C.J."/>
            <person name="Southwick A.M."/>
            <person name="Wu H.C."/>
            <person name="Kim C.J."/>
            <person name="Nguyen M."/>
            <person name="Pham P.K."/>
            <person name="Cheuk R.F."/>
            <person name="Karlin-Newmann G."/>
            <person name="Liu S.X."/>
            <person name="Lam B."/>
            <person name="Sakano H."/>
            <person name="Wu T."/>
            <person name="Yu G."/>
            <person name="Miranda M."/>
            <person name="Quach H.L."/>
            <person name="Tripp M."/>
            <person name="Chang C.H."/>
            <person name="Lee J.M."/>
            <person name="Toriumi M.J."/>
            <person name="Chan M.M."/>
            <person name="Tang C.C."/>
            <person name="Onodera C.S."/>
            <person name="Deng J.M."/>
            <person name="Akiyama K."/>
            <person name="Ansari Y."/>
            <person name="Arakawa T."/>
            <person name="Banh J."/>
            <person name="Banno F."/>
            <person name="Bowser L."/>
            <person name="Brooks S.Y."/>
            <person name="Carninci P."/>
            <person name="Chao Q."/>
            <person name="Choy N."/>
            <person name="Enju A."/>
            <person name="Goldsmith A.D."/>
            <person name="Gurjal M."/>
            <person name="Hansen N.F."/>
            <person name="Hayashizaki Y."/>
            <person name="Johnson-Hopson C."/>
            <person name="Hsuan V.W."/>
            <person name="Iida K."/>
            <person name="Karnes M."/>
            <person name="Khan S."/>
            <person name="Koesema E."/>
            <person name="Ishida J."/>
            <person name="Jiang P.X."/>
            <person name="Jones T."/>
            <person name="Kawai J."/>
            <person name="Kamiya A."/>
            <person name="Meyers C."/>
            <person name="Nakajima M."/>
            <person name="Narusaka M."/>
            <person name="Seki M."/>
            <person name="Sakurai T."/>
            <person name="Satou M."/>
            <person name="Tamse R."/>
            <person name="Vaysberg M."/>
            <person name="Wallender E.K."/>
            <person name="Wong C."/>
            <person name="Yamamura Y."/>
            <person name="Yuan S."/>
            <person name="Shinozaki K."/>
            <person name="Davis R.W."/>
            <person name="Theologis A."/>
            <person name="Ecker J.R."/>
        </authorList>
    </citation>
    <scope>NUCLEOTIDE SEQUENCE [LARGE SCALE MRNA]</scope>
    <source>
        <strain>cv. Columbia</strain>
    </source>
</reference>
<reference key="5">
    <citation type="journal article" date="2003" name="Genetics">
        <title>Molecular population genetics of the Arabidopsis CLAVATA2 region: the genomic scale of variation and selection in a selfing species.</title>
        <authorList>
            <person name="Shepard K.A."/>
            <person name="Purugganan M.D."/>
        </authorList>
    </citation>
    <scope>NUCLEOTIDE SEQUENCE [GENOMIC DNA] OF 76-385</scope>
    <scope>VARIANTS SER-80; GLY-87; CYS-110; ILE-125; ILE-134; 139-ALA--VAL-142 DELINS PRO-THR-PHE-MET; THR-139; GLY-148; ASN-157; ILE-162; ASP-168; LEU-178; ILE-178; ILE-207; ARG-227; 244-ILE--ILE-247 DELINS VAL-LEU-ASN-LEU; THR-264; VAL-285; CYS-303 AND SER-374</scope>
    <source>
        <strain>cv. An-2</strain>
        <strain>cv. Bla-1</strain>
        <strain>cv. Bs-1</strain>
        <strain>cv. Bu-0</strain>
        <strain>cv. Chi-1</strain>
        <strain>cv. Co-1</strain>
        <strain>cv. Columbia</strain>
        <strain>cv. Cvi-0</strain>
        <strain>cv. El-0</strain>
        <strain>cv. Fi-0</strain>
        <strain>cv. Gr-3</strain>
        <strain>cv. Ita-0</strain>
        <strain>cv. Jl-3</strain>
        <strain>cv. Kas-1</strain>
        <strain>cv. Lan-0</strain>
        <strain>cv. Landsberg erecta</strain>
        <strain>cv. Lisse-2</strain>
        <strain>cv. Lu-1</strain>
        <strain>cv. Pi-0</strain>
        <strain>cv. Sf-1</strain>
        <strain>cv. Wassilewskija</strain>
    </source>
</reference>
<reference key="6">
    <citation type="journal article" date="1998" name="Development">
        <title>CLAVATA2, a regulator of meristem and organ development in Arabidopsis.</title>
        <authorList>
            <person name="Kayes J.M."/>
            <person name="Clark S.E."/>
        </authorList>
    </citation>
    <scope>FUNCTION</scope>
    <scope>DISRUPTION PHENOTYPE</scope>
</reference>
<reference key="7">
    <citation type="journal article" date="2005" name="Plant Cell">
        <title>The 14-amino acid CLV3, CLE19, and CLE40 peptides trigger consumption of the root meristem in Arabidopsis through a CLAVATA2-dependent pathway.</title>
        <authorList>
            <person name="Fiers M."/>
            <person name="Golemiec E."/>
            <person name="Xu J."/>
            <person name="van der Geest L."/>
            <person name="Heidstra R."/>
            <person name="Stiekema W."/>
            <person name="Liu C.-M."/>
        </authorList>
    </citation>
    <scope>FUNCTION</scope>
    <scope>DISRUPTION PHENOTYPE</scope>
</reference>
<reference key="8">
    <citation type="journal article" date="2005" name="Plant Physiol.">
        <title>Phylogenomic analysis of the receptor-like proteins of rice and Arabidopsis.</title>
        <authorList>
            <person name="Fritz-Laylin L.K."/>
            <person name="Krishnamurthy N."/>
            <person name="Toer M."/>
            <person name="Sjoelander K.V."/>
            <person name="Jones J.D."/>
        </authorList>
    </citation>
    <scope>GENE FAMILY</scope>
</reference>
<reference key="9">
    <citation type="journal article" date="2008" name="Plant Physiol.">
        <title>A genome-wide functional investigation into the roles of receptor-like proteins in Arabidopsis.</title>
        <authorList>
            <person name="Wang G."/>
            <person name="Ellendorff U."/>
            <person name="Kemp B."/>
            <person name="Mansfield J.W."/>
            <person name="Forsyth A."/>
            <person name="Mitchell K."/>
            <person name="Bastas K."/>
            <person name="Liu C.-M."/>
            <person name="Woods-Toer A."/>
            <person name="Zipfel C."/>
            <person name="de Wit P.J.G.M."/>
            <person name="Jones J.D.G."/>
            <person name="Toer M."/>
            <person name="Thomma B.P.H.J."/>
        </authorList>
    </citation>
    <scope>GENE FAMILY</scope>
    <scope>NOMENCLATURE</scope>
</reference>
<reference key="10">
    <citation type="journal article" date="2010" name="Planta">
        <title>CLE14/CLE20 peptides may interact with CLAVATA2/CORYNE receptor-like kinases to irreversibly inhibit cell division in the root meristem of Arabidopsis.</title>
        <authorList>
            <person name="Meng L."/>
            <person name="Feldman L.J."/>
        </authorList>
    </citation>
    <scope>FUNCTION</scope>
    <scope>SUBUNIT</scope>
    <scope>INTERACTION WITH CLE PEPTIDES</scope>
</reference>
<reference key="11">
    <citation type="journal article" date="2010" name="Plant J.">
        <title>Analysis of interactions among the CLAVATA3 receptors reveals a direct interaction between CLAVATA2 and CORYNE in Arabidopsis.</title>
        <authorList>
            <person name="Zhu Y."/>
            <person name="Wang Y."/>
            <person name="Li R."/>
            <person name="Song X."/>
            <person name="Wang Q."/>
            <person name="Huang S."/>
            <person name="Jin J.B."/>
            <person name="Liu C.-M."/>
            <person name="Lin J."/>
        </authorList>
    </citation>
    <scope>INTERACTION WITH CRN</scope>
</reference>
<reference key="12">
    <citation type="journal article" date="2010" name="Plant J.">
        <title>CLAVATA2 forms a distinct CLE-binding receptor complex regulating Arabidopsis stem cell specification.</title>
        <authorList>
            <person name="Guo Y."/>
            <person name="Han L."/>
            <person name="Hymes M."/>
            <person name="Denver R."/>
            <person name="Clark S.E."/>
        </authorList>
    </citation>
    <scope>INTERACTION WITH CRN; CLV3 AND CLE PEPTIDES</scope>
</reference>
<reference key="13">
    <citation type="journal article" date="2010" name="Plant Physiol.">
        <title>Stem cell signaling in Arabidopsis requires CRN to localize CLV2 to the plasma membrane.</title>
        <authorList>
            <person name="Bleckmann A."/>
            <person name="Weidtkamp-Peters S."/>
            <person name="Seidel C.A.M."/>
            <person name="Simon R."/>
        </authorList>
    </citation>
    <scope>FUNCTION</scope>
    <scope>SUBCELLULAR LOCATION</scope>
    <scope>SUBUNIT</scope>
</reference>
<reference key="14">
    <citation type="journal article" date="2010" name="Plant Physiol.">
        <title>Functional analyses of the CLAVATA2-like proteins and their domains that contribute to CLAVATA2 specificity.</title>
        <authorList>
            <person name="Wang G."/>
            <person name="Long Y."/>
            <person name="Thomma B.P.H.J."/>
            <person name="de Wit P.J.G.M."/>
            <person name="Angenent G.C."/>
            <person name="Fiers M."/>
        </authorList>
    </citation>
    <scope>FUNCTION</scope>
</reference>
<reference key="15">
    <citation type="journal article" date="2010" name="Plant Signal. Behav.">
        <title>Multiple receptor complexes assembled for transmitting CLV3 signaling in Arabidopsis.</title>
        <authorList>
            <person name="Zhu Y."/>
            <person name="Wan Y."/>
            <person name="Lin J."/>
        </authorList>
    </citation>
    <scope>SUBUNIT</scope>
</reference>
<reference key="16">
    <citation type="journal article" date="2010" name="Plant Signal. Behav.">
        <title>Membrane distributions of two ligand-binding receptor complexes in the CLAVATA pathway.</title>
        <authorList>
            <person name="Guo Y."/>
            <person name="Clark S.E."/>
        </authorList>
    </citation>
    <scope>SUBCELLULAR LOCATION</scope>
</reference>
<reference key="17">
    <citation type="journal article" date="2011" name="Genetics">
        <title>CLAVATA signaling pathway receptors of Arabidopsis regulate cell proliferation in fruit organ formation as well as in meristems.</title>
        <authorList>
            <person name="Durbak A.R."/>
            <person name="Tax F.E."/>
        </authorList>
    </citation>
    <scope>DISRUPTION PHENOTYPE</scope>
</reference>
<reference key="18">
    <citation type="journal article" date="2011" name="Plant J.">
        <title>Nematode CLE signaling in Arabidopsis requires CLAVATA2 and CORYNE.</title>
        <authorList>
            <person name="Replogle A."/>
            <person name="Wang J."/>
            <person name="Bleckmann A."/>
            <person name="Hussey R.S."/>
            <person name="Baum T.J."/>
            <person name="Sawa S."/>
            <person name="Davis E.L."/>
            <person name="Wang X."/>
            <person name="Simon R."/>
            <person name="Mitchum M.G."/>
        </authorList>
    </citation>
    <scope>FUNCTION</scope>
    <scope>DISRUPTION PHENOTYPE</scope>
    <scope>TISSUE SPECIFICITY</scope>
</reference>
<reference key="19">
    <citation type="journal article" date="2011" name="Plant Physiol.">
        <title>Mechanisms of molecular mimicry of plant CLE peptide ligands by the parasitic nematode Globodera rostochiensis.</title>
        <authorList>
            <person name="Guo Y."/>
            <person name="Ni J."/>
            <person name="Denver R."/>
            <person name="Wang X."/>
            <person name="Clark S.E."/>
        </authorList>
    </citation>
    <scope>FUNCTION</scope>
</reference>
<reference key="20">
    <citation type="journal article" date="2014" name="Curr. Opin. Plant Biol.">
        <title>Receptor like proteins associate with SOBIR1-type of adaptors to form bimolecular receptor kinases.</title>
        <authorList>
            <person name="Gust A.A."/>
            <person name="Felix G."/>
        </authorList>
    </citation>
    <scope>REVIEW</scope>
</reference>
<reference key="21">
    <citation type="journal article" date="2016" name="J. Exp. Bot.">
        <title>Shared and distinct functions of the pseudokinase CORYNE (CRN) in shoot and root stem cell maintenance of Arabidopsis.</title>
        <authorList>
            <person name="Somssich M."/>
            <person name="Bleckmann A."/>
            <person name="Simon R."/>
        </authorList>
    </citation>
    <scope>DISRUPTION PHENOTYPE</scope>
    <scope>DEVELOPMENTAL STAGE</scope>
    <scope>INTERACTION WITH CRN</scope>
    <scope>SUBCELLULAR LOCATION</scope>
    <source>
        <strain>cv. Columbia</strain>
        <strain>cv. Landsberg erecta</strain>
    </source>
</reference>
<reference key="22">
    <citation type="journal article" date="2016" name="New Phytol.">
        <title>Arabidopsis CLAVATA1 and CLAVATA2 receptors contribute to Ralstonia solanacearum pathogenicity through a miR169-dependent pathway.</title>
        <authorList>
            <person name="Hanemian M."/>
            <person name="Barlet X."/>
            <person name="Sorin C."/>
            <person name="Yadeta K.A."/>
            <person name="Keller H."/>
            <person name="Favery B."/>
            <person name="Simon R."/>
            <person name="Thomma B.P."/>
            <person name="Hartmann C."/>
            <person name="Crespi M."/>
            <person name="Marco Y."/>
            <person name="Tremousaygue D."/>
            <person name="Deslandes L."/>
        </authorList>
    </citation>
    <scope>DISRUPTION PHENOTYPE</scope>
</reference>
<reference key="23">
    <citation type="journal article" date="2017" name="Dev. Cell">
        <title>Phosphate starvation-dependent iron mobilization induces CLE14 expression to trigger root meristem differentiation through CLV2/PEPR2 signaling.</title>
        <authorList>
            <person name="Gutierrez-Alanis D."/>
            <person name="Yong-Villalobos L."/>
            <person name="Jimenez-Sandoval P."/>
            <person name="Alatorre-Cobos F."/>
            <person name="Oropeza-Aburto A."/>
            <person name="Mora-Macias J."/>
            <person name="Sanchez-Rodriguez F."/>
            <person name="Cruz-Ramirez A."/>
            <person name="Herrera-Estrella L."/>
        </authorList>
    </citation>
    <scope>FUNCTION</scope>
    <scope>INTERACTION WITH CLE14</scope>
</reference>
<reference key="24">
    <citation type="journal article" date="2017" name="EMBO Rep.">
        <title>Perception of root-active CLE peptides requires CORYNE function in the phloem vasculature.</title>
        <authorList>
            <person name="Hazak O."/>
            <person name="Brandt B."/>
            <person name="Cattaneo P."/>
            <person name="Santiago J."/>
            <person name="Rodriguez-Villalon A."/>
            <person name="Hothorn M."/>
            <person name="Hardtke C.S."/>
        </authorList>
    </citation>
    <scope>FUNCTION</scope>
    <scope>DISRUPTION PHENOTYPE</scope>
    <scope>TISSUE SPECIFICITY</scope>
    <scope>SUBCELLULAR LOCATION</scope>
    <scope>SUBUNIT</scope>
    <source>
        <strain>cv. Columbia</strain>
    </source>
</reference>
<accession>O80809</accession>
<accession>Q84JK9</accession>
<accession>Q84JT8</accession>
<accession>Q84JU7</accession>
<accession>Q84K94</accession>
<accession>Q84VM8</accession>
<accession>Q84VM9</accession>
<accession>Q84VN0</accession>
<accession>Q9SPE8</accession>
<accession>Q9SPE9</accession>
<dbReference type="EMBL" id="AF177672">
    <property type="protein sequence ID" value="AAF02654.1"/>
    <property type="molecule type" value="Genomic_DNA"/>
</dbReference>
<dbReference type="EMBL" id="AF177673">
    <property type="protein sequence ID" value="AAF02655.1"/>
    <property type="molecule type" value="Genomic_DNA"/>
</dbReference>
<dbReference type="EMBL" id="AF177674">
    <property type="protein sequence ID" value="AAF02656.1"/>
    <property type="molecule type" value="Genomic_DNA"/>
</dbReference>
<dbReference type="EMBL" id="AC004512">
    <property type="protein sequence ID" value="AAC27153.1"/>
    <property type="molecule type" value="Genomic_DNA"/>
</dbReference>
<dbReference type="EMBL" id="CP002684">
    <property type="protein sequence ID" value="AEE34367.1"/>
    <property type="molecule type" value="Genomic_DNA"/>
</dbReference>
<dbReference type="EMBL" id="AY065442">
    <property type="protein sequence ID" value="AAL38883.1"/>
    <property type="molecule type" value="mRNA"/>
</dbReference>
<dbReference type="EMBL" id="AY096537">
    <property type="protein sequence ID" value="AAM20187.1"/>
    <property type="molecule type" value="mRNA"/>
</dbReference>
<dbReference type="EMBL" id="AF528591">
    <property type="protein sequence ID" value="AAO43328.1"/>
    <property type="molecule type" value="Genomic_DNA"/>
</dbReference>
<dbReference type="EMBL" id="AF528592">
    <property type="protein sequence ID" value="AAO43329.1"/>
    <property type="molecule type" value="Genomic_DNA"/>
</dbReference>
<dbReference type="EMBL" id="AF528593">
    <property type="protein sequence ID" value="AAO43330.1"/>
    <property type="molecule type" value="Genomic_DNA"/>
</dbReference>
<dbReference type="EMBL" id="AF528594">
    <property type="protein sequence ID" value="AAO43331.1"/>
    <property type="molecule type" value="Genomic_DNA"/>
</dbReference>
<dbReference type="EMBL" id="AF528595">
    <property type="protein sequence ID" value="AAO43332.1"/>
    <property type="molecule type" value="Genomic_DNA"/>
</dbReference>
<dbReference type="EMBL" id="AF528596">
    <property type="protein sequence ID" value="AAO43333.1"/>
    <property type="molecule type" value="Genomic_DNA"/>
</dbReference>
<dbReference type="EMBL" id="AF528597">
    <property type="protein sequence ID" value="AAO43334.1"/>
    <property type="molecule type" value="Genomic_DNA"/>
</dbReference>
<dbReference type="EMBL" id="AF528598">
    <property type="protein sequence ID" value="AAO43335.1"/>
    <property type="molecule type" value="Genomic_DNA"/>
</dbReference>
<dbReference type="EMBL" id="AF528599">
    <property type="protein sequence ID" value="AAO43336.1"/>
    <property type="molecule type" value="Genomic_DNA"/>
</dbReference>
<dbReference type="EMBL" id="AF528600">
    <property type="protein sequence ID" value="AAO43337.1"/>
    <property type="molecule type" value="Genomic_DNA"/>
</dbReference>
<dbReference type="EMBL" id="AF528601">
    <property type="protein sequence ID" value="AAO43338.1"/>
    <property type="molecule type" value="Genomic_DNA"/>
</dbReference>
<dbReference type="EMBL" id="AF528602">
    <property type="protein sequence ID" value="AAO43339.1"/>
    <property type="molecule type" value="Genomic_DNA"/>
</dbReference>
<dbReference type="EMBL" id="AF528603">
    <property type="protein sequence ID" value="AAO43340.1"/>
    <property type="molecule type" value="Genomic_DNA"/>
</dbReference>
<dbReference type="EMBL" id="AF528604">
    <property type="protein sequence ID" value="AAO43341.1"/>
    <property type="molecule type" value="Genomic_DNA"/>
</dbReference>
<dbReference type="EMBL" id="AF528605">
    <property type="protein sequence ID" value="AAO43342.1"/>
    <property type="molecule type" value="Genomic_DNA"/>
</dbReference>
<dbReference type="EMBL" id="AF528606">
    <property type="protein sequence ID" value="AAO43343.1"/>
    <property type="molecule type" value="Genomic_DNA"/>
</dbReference>
<dbReference type="EMBL" id="AF528607">
    <property type="protein sequence ID" value="AAO43344.1"/>
    <property type="molecule type" value="Genomic_DNA"/>
</dbReference>
<dbReference type="EMBL" id="AF528608">
    <property type="protein sequence ID" value="AAO43345.1"/>
    <property type="molecule type" value="Genomic_DNA"/>
</dbReference>
<dbReference type="EMBL" id="AF528609">
    <property type="protein sequence ID" value="AAO43346.1"/>
    <property type="molecule type" value="Genomic_DNA"/>
</dbReference>
<dbReference type="EMBL" id="AF528610">
    <property type="protein sequence ID" value="AAO43347.1"/>
    <property type="molecule type" value="Genomic_DNA"/>
</dbReference>
<dbReference type="EMBL" id="AF528611">
    <property type="protein sequence ID" value="AAO43348.1"/>
    <property type="molecule type" value="Genomic_DNA"/>
</dbReference>
<dbReference type="PIR" id="T02361">
    <property type="entry name" value="T02361"/>
</dbReference>
<dbReference type="RefSeq" id="NP_176717.1">
    <property type="nucleotide sequence ID" value="NM_105212.3"/>
</dbReference>
<dbReference type="SMR" id="O80809"/>
<dbReference type="BioGRID" id="28070">
    <property type="interactions" value="8"/>
</dbReference>
<dbReference type="FunCoup" id="O80809">
    <property type="interactions" value="729"/>
</dbReference>
<dbReference type="IntAct" id="O80809">
    <property type="interactions" value="4"/>
</dbReference>
<dbReference type="STRING" id="3702.O80809"/>
<dbReference type="GlyCosmos" id="O80809">
    <property type="glycosylation" value="15 sites, No reported glycans"/>
</dbReference>
<dbReference type="GlyGen" id="O80809">
    <property type="glycosylation" value="15 sites"/>
</dbReference>
<dbReference type="PaxDb" id="3702-AT1G65380.1"/>
<dbReference type="ProteomicsDB" id="241069"/>
<dbReference type="EnsemblPlants" id="AT1G65380.1">
    <property type="protein sequence ID" value="AT1G65380.1"/>
    <property type="gene ID" value="AT1G65380"/>
</dbReference>
<dbReference type="GeneID" id="842849"/>
<dbReference type="Gramene" id="AT1G65380.1">
    <property type="protein sequence ID" value="AT1G65380.1"/>
    <property type="gene ID" value="AT1G65380"/>
</dbReference>
<dbReference type="KEGG" id="ath:AT1G65380"/>
<dbReference type="Araport" id="AT1G65380"/>
<dbReference type="TAIR" id="AT1G65380">
    <property type="gene designation" value="CLV2"/>
</dbReference>
<dbReference type="eggNOG" id="KOG0619">
    <property type="taxonomic scope" value="Eukaryota"/>
</dbReference>
<dbReference type="HOGENOM" id="CLU_000288_18_4_1"/>
<dbReference type="InParanoid" id="O80809"/>
<dbReference type="OMA" id="KWSNLRY"/>
<dbReference type="PhylomeDB" id="O80809"/>
<dbReference type="PRO" id="PR:O80809"/>
<dbReference type="Proteomes" id="UP000006548">
    <property type="component" value="Chromosome 1"/>
</dbReference>
<dbReference type="ExpressionAtlas" id="O80809">
    <property type="expression patterns" value="baseline and differential"/>
</dbReference>
<dbReference type="GO" id="GO:0005789">
    <property type="term" value="C:endoplasmic reticulum membrane"/>
    <property type="evidence" value="ECO:0000314"/>
    <property type="project" value="UniProtKB"/>
</dbReference>
<dbReference type="GO" id="GO:0016020">
    <property type="term" value="C:membrane"/>
    <property type="evidence" value="ECO:0000250"/>
    <property type="project" value="TAIR"/>
</dbReference>
<dbReference type="GO" id="GO:0005886">
    <property type="term" value="C:plasma membrane"/>
    <property type="evidence" value="ECO:0000314"/>
    <property type="project" value="UniProtKB"/>
</dbReference>
<dbReference type="GO" id="GO:0001653">
    <property type="term" value="F:peptide receptor activity"/>
    <property type="evidence" value="ECO:0000315"/>
    <property type="project" value="UniProtKB"/>
</dbReference>
<dbReference type="GO" id="GO:0010078">
    <property type="term" value="P:maintenance of root meristem identity"/>
    <property type="evidence" value="ECO:0000315"/>
    <property type="project" value="UniProtKB"/>
</dbReference>
<dbReference type="GO" id="GO:0048507">
    <property type="term" value="P:meristem development"/>
    <property type="evidence" value="ECO:0000315"/>
    <property type="project" value="TAIR"/>
</dbReference>
<dbReference type="GO" id="GO:0010088">
    <property type="term" value="P:phloem development"/>
    <property type="evidence" value="ECO:0000315"/>
    <property type="project" value="UniProtKB"/>
</dbReference>
<dbReference type="GO" id="GO:0045595">
    <property type="term" value="P:regulation of cell differentiation"/>
    <property type="evidence" value="ECO:0000315"/>
    <property type="project" value="UniProtKB"/>
</dbReference>
<dbReference type="GO" id="GO:0010075">
    <property type="term" value="P:regulation of meristem growth"/>
    <property type="evidence" value="ECO:0000314"/>
    <property type="project" value="UniProtKB"/>
</dbReference>
<dbReference type="FunFam" id="3.80.10.10:FF:000356">
    <property type="entry name" value="LRR receptor-like serine/threonine-protein kinase"/>
    <property type="match status" value="1"/>
</dbReference>
<dbReference type="FunFam" id="3.80.10.10:FF:000539">
    <property type="entry name" value="LRR receptor-like serine/threonine-protein kinase EFR"/>
    <property type="match status" value="1"/>
</dbReference>
<dbReference type="Gene3D" id="3.80.10.10">
    <property type="entry name" value="Ribonuclease Inhibitor"/>
    <property type="match status" value="3"/>
</dbReference>
<dbReference type="InterPro" id="IPR001611">
    <property type="entry name" value="Leu-rich_rpt"/>
</dbReference>
<dbReference type="InterPro" id="IPR003591">
    <property type="entry name" value="Leu-rich_rpt_typical-subtyp"/>
</dbReference>
<dbReference type="InterPro" id="IPR032675">
    <property type="entry name" value="LRR_dom_sf"/>
</dbReference>
<dbReference type="InterPro" id="IPR046956">
    <property type="entry name" value="RLP23-like"/>
</dbReference>
<dbReference type="PANTHER" id="PTHR48063">
    <property type="entry name" value="LRR RECEPTOR-LIKE KINASE"/>
    <property type="match status" value="1"/>
</dbReference>
<dbReference type="PANTHER" id="PTHR48063:SF112">
    <property type="entry name" value="RECEPTOR LIKE PROTEIN 30-LIKE"/>
    <property type="match status" value="1"/>
</dbReference>
<dbReference type="Pfam" id="PF00560">
    <property type="entry name" value="LRR_1"/>
    <property type="match status" value="7"/>
</dbReference>
<dbReference type="Pfam" id="PF13855">
    <property type="entry name" value="LRR_8"/>
    <property type="match status" value="2"/>
</dbReference>
<dbReference type="PRINTS" id="PR00019">
    <property type="entry name" value="LEURICHRPT"/>
</dbReference>
<dbReference type="SMART" id="SM00369">
    <property type="entry name" value="LRR_TYP"/>
    <property type="match status" value="10"/>
</dbReference>
<dbReference type="SUPFAM" id="SSF52058">
    <property type="entry name" value="L domain-like"/>
    <property type="match status" value="2"/>
</dbReference>
<dbReference type="PROSITE" id="PS51450">
    <property type="entry name" value="LRR"/>
    <property type="match status" value="14"/>
</dbReference>